<keyword id="KW-0880">Kelch repeat</keyword>
<keyword id="KW-0433">Leucine-rich repeat</keyword>
<keyword id="KW-1185">Reference proteome</keyword>
<keyword id="KW-0677">Repeat</keyword>
<proteinExistence type="evidence at transcript level"/>
<sequence>MVFISETSDDGSNGGDPTKNPQEEEEENLPPIPQGIPDELIESTVLLIRRCHYPTLSLLSKTFRRVISSSELYKSRFILNLTDSVLYALIGFSPYNTTNLYILNCNIPRNISLHLREIKSLPPLNHGSAVVTIGYHMYVIGGHNRLHQPTSNVSIIDLRFHTSCSLPRMQRTRVYAAAGVIDGRIYVIGGCVKRNDHWIEVFDIENRIWSSVPHHRYCNGSSLRGEGFVTSVVMQNKIYILDSLFGFAYEPRHGTLQSLGFETQFMFLWRDPCCVIEGLLYCIDPMCVLGHAIVVYDPNELIWRRVKGAYILPKFCYYQCKMANFGGKLAILGCSNSSQRGLKDVWFVEIELENRQSGEIWGKVDSLAIVLRSVKSPSIDLFRSVTF</sequence>
<accession>O82379</accession>
<reference key="1">
    <citation type="journal article" date="1999" name="Nature">
        <title>Sequence and analysis of chromosome 2 of the plant Arabidopsis thaliana.</title>
        <authorList>
            <person name="Lin X."/>
            <person name="Kaul S."/>
            <person name="Rounsley S.D."/>
            <person name="Shea T.P."/>
            <person name="Benito M.-I."/>
            <person name="Town C.D."/>
            <person name="Fujii C.Y."/>
            <person name="Mason T.M."/>
            <person name="Bowman C.L."/>
            <person name="Barnstead M.E."/>
            <person name="Feldblyum T.V."/>
            <person name="Buell C.R."/>
            <person name="Ketchum K.A."/>
            <person name="Lee J.J."/>
            <person name="Ronning C.M."/>
            <person name="Koo H.L."/>
            <person name="Moffat K.S."/>
            <person name="Cronin L.A."/>
            <person name="Shen M."/>
            <person name="Pai G."/>
            <person name="Van Aken S."/>
            <person name="Umayam L."/>
            <person name="Tallon L.J."/>
            <person name="Gill J.E."/>
            <person name="Adams M.D."/>
            <person name="Carrera A.J."/>
            <person name="Creasy T.H."/>
            <person name="Goodman H.M."/>
            <person name="Somerville C.R."/>
            <person name="Copenhaver G.P."/>
            <person name="Preuss D."/>
            <person name="Nierman W.C."/>
            <person name="White O."/>
            <person name="Eisen J.A."/>
            <person name="Salzberg S.L."/>
            <person name="Fraser C.M."/>
            <person name="Venter J.C."/>
        </authorList>
    </citation>
    <scope>NUCLEOTIDE SEQUENCE [LARGE SCALE GENOMIC DNA]</scope>
    <source>
        <strain>cv. Columbia</strain>
    </source>
</reference>
<reference key="2">
    <citation type="journal article" date="2017" name="Plant J.">
        <title>Araport11: a complete reannotation of the Arabidopsis thaliana reference genome.</title>
        <authorList>
            <person name="Cheng C.Y."/>
            <person name="Krishnakumar V."/>
            <person name="Chan A.P."/>
            <person name="Thibaud-Nissen F."/>
            <person name="Schobel S."/>
            <person name="Town C.D."/>
        </authorList>
    </citation>
    <scope>GENOME REANNOTATION</scope>
    <source>
        <strain>cv. Columbia</strain>
    </source>
</reference>
<reference key="3">
    <citation type="submission" date="2004-06" db="EMBL/GenBank/DDBJ databases">
        <authorList>
            <person name="Underwood B.A."/>
            <person name="Xiao Y.-L."/>
            <person name="Moskal W.A. Jr."/>
            <person name="Monaghan E.L."/>
            <person name="Wang W."/>
            <person name="Redman J.C."/>
            <person name="Wu H.C."/>
            <person name="Utterback T."/>
            <person name="Town C.D."/>
        </authorList>
    </citation>
    <scope>NUCLEOTIDE SEQUENCE [LARGE SCALE GENOMIC DNA]</scope>
    <source>
        <strain>cv. Columbia</strain>
    </source>
</reference>
<reference key="4">
    <citation type="journal article" date="2005" name="Plant Physiol.">
        <title>Analysis of the cDNAs of hypothetical genes on Arabidopsis chromosome 2 reveals numerous transcript variants.</title>
        <authorList>
            <person name="Xiao Y.-L."/>
            <person name="Smith S.R."/>
            <person name="Ishmael N."/>
            <person name="Redman J.C."/>
            <person name="Kumar N."/>
            <person name="Monaghan E.L."/>
            <person name="Ayele M."/>
            <person name="Haas B.J."/>
            <person name="Wu H.C."/>
            <person name="Town C.D."/>
        </authorList>
    </citation>
    <scope>NUCLEOTIDE SEQUENCE [LARGE SCALE MRNA]</scope>
    <source>
        <strain>cv. Columbia</strain>
    </source>
</reference>
<gene>
    <name type="ordered locus">At2g29770</name>
    <name type="ORF">T27A16.13</name>
</gene>
<organism>
    <name type="scientific">Arabidopsis thaliana</name>
    <name type="common">Mouse-ear cress</name>
    <dbReference type="NCBI Taxonomy" id="3702"/>
    <lineage>
        <taxon>Eukaryota</taxon>
        <taxon>Viridiplantae</taxon>
        <taxon>Streptophyta</taxon>
        <taxon>Embryophyta</taxon>
        <taxon>Tracheophyta</taxon>
        <taxon>Spermatophyta</taxon>
        <taxon>Magnoliopsida</taxon>
        <taxon>eudicotyledons</taxon>
        <taxon>Gunneridae</taxon>
        <taxon>Pentapetalae</taxon>
        <taxon>rosids</taxon>
        <taxon>malvids</taxon>
        <taxon>Brassicales</taxon>
        <taxon>Brassicaceae</taxon>
        <taxon>Camelineae</taxon>
        <taxon>Arabidopsis</taxon>
    </lineage>
</organism>
<feature type="chain" id="PRO_0000283166" description="F-box/LRR-repeat/kelch-repeat protein At2g29770">
    <location>
        <begin position="1"/>
        <end position="387"/>
    </location>
</feature>
<feature type="domain" description="F-box">
    <location>
        <begin position="31"/>
        <end position="78"/>
    </location>
</feature>
<feature type="repeat" description="LRR 1">
    <location>
        <begin position="105"/>
        <end position="128"/>
    </location>
</feature>
<feature type="repeat" description="Kelch 1">
    <location>
        <begin position="136"/>
        <end position="183"/>
    </location>
</feature>
<feature type="repeat" description="Kelch 2">
    <location>
        <begin position="184"/>
        <end position="231"/>
    </location>
</feature>
<feature type="repeat" description="LRR 2">
    <location>
        <begin position="196"/>
        <end position="219"/>
    </location>
</feature>
<feature type="region of interest" description="Disordered" evidence="1">
    <location>
        <begin position="1"/>
        <end position="34"/>
    </location>
</feature>
<name>FBLK4_ARATH</name>
<dbReference type="EMBL" id="AC005496">
    <property type="protein sequence ID" value="AAC35224.1"/>
    <property type="molecule type" value="Genomic_DNA"/>
</dbReference>
<dbReference type="EMBL" id="CP002685">
    <property type="protein sequence ID" value="AEC08302.1"/>
    <property type="molecule type" value="Genomic_DNA"/>
</dbReference>
<dbReference type="EMBL" id="AY649252">
    <property type="protein sequence ID" value="AAT69169.1"/>
    <property type="molecule type" value="Genomic_DNA"/>
</dbReference>
<dbReference type="EMBL" id="AY219120">
    <property type="protein sequence ID" value="AAO37207.1"/>
    <property type="molecule type" value="mRNA"/>
</dbReference>
<dbReference type="PIR" id="D84700">
    <property type="entry name" value="D84700"/>
</dbReference>
<dbReference type="RefSeq" id="NP_180538.1">
    <property type="nucleotide sequence ID" value="NM_128531.2"/>
</dbReference>
<dbReference type="SMR" id="O82379"/>
<dbReference type="PaxDb" id="3702-AT2G29770.1"/>
<dbReference type="EnsemblPlants" id="AT2G29770.1">
    <property type="protein sequence ID" value="AT2G29770.1"/>
    <property type="gene ID" value="AT2G29770"/>
</dbReference>
<dbReference type="GeneID" id="817527"/>
<dbReference type="Gramene" id="AT2G29770.1">
    <property type="protein sequence ID" value="AT2G29770.1"/>
    <property type="gene ID" value="AT2G29770"/>
</dbReference>
<dbReference type="KEGG" id="ath:AT2G29770"/>
<dbReference type="Araport" id="AT2G29770"/>
<dbReference type="TAIR" id="AT2G29770"/>
<dbReference type="eggNOG" id="KOG1072">
    <property type="taxonomic scope" value="Eukaryota"/>
</dbReference>
<dbReference type="HOGENOM" id="CLU_032521_1_2_1"/>
<dbReference type="InParanoid" id="O82379"/>
<dbReference type="OMA" id="QCKMANF"/>
<dbReference type="PhylomeDB" id="O82379"/>
<dbReference type="PRO" id="PR:O82379"/>
<dbReference type="Proteomes" id="UP000006548">
    <property type="component" value="Chromosome 2"/>
</dbReference>
<dbReference type="ExpressionAtlas" id="O82379">
    <property type="expression patterns" value="baseline and differential"/>
</dbReference>
<dbReference type="Gene3D" id="2.120.10.80">
    <property type="entry name" value="Kelch-type beta propeller"/>
    <property type="match status" value="1"/>
</dbReference>
<dbReference type="InterPro" id="IPR050354">
    <property type="entry name" value="F-box/kelch-repeat_ARATH"/>
</dbReference>
<dbReference type="InterPro" id="IPR001810">
    <property type="entry name" value="F-box_dom"/>
</dbReference>
<dbReference type="InterPro" id="IPR015915">
    <property type="entry name" value="Kelch-typ_b-propeller"/>
</dbReference>
<dbReference type="InterPro" id="IPR006652">
    <property type="entry name" value="Kelch_1"/>
</dbReference>
<dbReference type="PANTHER" id="PTHR24414:SF65">
    <property type="entry name" value="F-BOX DOMAIN-CONTAINING PROTEIN"/>
    <property type="match status" value="1"/>
</dbReference>
<dbReference type="PANTHER" id="PTHR24414">
    <property type="entry name" value="F-BOX/KELCH-REPEAT PROTEIN SKIP4"/>
    <property type="match status" value="1"/>
</dbReference>
<dbReference type="Pfam" id="PF00646">
    <property type="entry name" value="F-box"/>
    <property type="match status" value="1"/>
</dbReference>
<dbReference type="Pfam" id="PF25210">
    <property type="entry name" value="Kelch_FKB95"/>
    <property type="match status" value="1"/>
</dbReference>
<dbReference type="SMART" id="SM00612">
    <property type="entry name" value="Kelch"/>
    <property type="match status" value="2"/>
</dbReference>
<dbReference type="SUPFAM" id="SSF117281">
    <property type="entry name" value="Kelch motif"/>
    <property type="match status" value="1"/>
</dbReference>
<evidence type="ECO:0000256" key="1">
    <source>
        <dbReference type="SAM" id="MobiDB-lite"/>
    </source>
</evidence>
<protein>
    <recommendedName>
        <fullName>F-box/LRR-repeat/kelch-repeat protein At2g29770</fullName>
    </recommendedName>
</protein>